<protein>
    <recommendedName>
        <fullName evidence="1">Uronate isomerase</fullName>
        <ecNumber evidence="1">5.3.1.12</ecNumber>
    </recommendedName>
    <alternativeName>
        <fullName evidence="1">Glucuronate isomerase</fullName>
    </alternativeName>
    <alternativeName>
        <fullName evidence="1">Uronic isomerase</fullName>
    </alternativeName>
</protein>
<evidence type="ECO:0000255" key="1">
    <source>
        <dbReference type="HAMAP-Rule" id="MF_00675"/>
    </source>
</evidence>
<accession>Q8R8Q6</accession>
<organism>
    <name type="scientific">Caldanaerobacter subterraneus subsp. tengcongensis (strain DSM 15242 / JCM 11007 / NBRC 100824 / MB4)</name>
    <name type="common">Thermoanaerobacter tengcongensis</name>
    <dbReference type="NCBI Taxonomy" id="273068"/>
    <lineage>
        <taxon>Bacteria</taxon>
        <taxon>Bacillati</taxon>
        <taxon>Bacillota</taxon>
        <taxon>Clostridia</taxon>
        <taxon>Thermoanaerobacterales</taxon>
        <taxon>Thermoanaerobacteraceae</taxon>
        <taxon>Caldanaerobacter</taxon>
    </lineage>
</organism>
<dbReference type="EC" id="5.3.1.12" evidence="1"/>
<dbReference type="EMBL" id="AE008691">
    <property type="protein sequence ID" value="AAM25118.1"/>
    <property type="molecule type" value="Genomic_DNA"/>
</dbReference>
<dbReference type="RefSeq" id="WP_011026082.1">
    <property type="nucleotide sequence ID" value="NC_003869.1"/>
</dbReference>
<dbReference type="SMR" id="Q8R8Q6"/>
<dbReference type="STRING" id="273068.TTE1939"/>
<dbReference type="KEGG" id="tte:TTE1939"/>
<dbReference type="eggNOG" id="COG1904">
    <property type="taxonomic scope" value="Bacteria"/>
</dbReference>
<dbReference type="HOGENOM" id="CLU_044465_1_0_9"/>
<dbReference type="OrthoDB" id="9766564at2"/>
<dbReference type="UniPathway" id="UPA00246"/>
<dbReference type="Proteomes" id="UP000000555">
    <property type="component" value="Chromosome"/>
</dbReference>
<dbReference type="GO" id="GO:0008880">
    <property type="term" value="F:glucuronate isomerase activity"/>
    <property type="evidence" value="ECO:0007669"/>
    <property type="project" value="UniProtKB-UniRule"/>
</dbReference>
<dbReference type="GO" id="GO:0019698">
    <property type="term" value="P:D-galacturonate catabolic process"/>
    <property type="evidence" value="ECO:0007669"/>
    <property type="project" value="TreeGrafter"/>
</dbReference>
<dbReference type="GO" id="GO:0042840">
    <property type="term" value="P:D-glucuronate catabolic process"/>
    <property type="evidence" value="ECO:0007669"/>
    <property type="project" value="TreeGrafter"/>
</dbReference>
<dbReference type="Gene3D" id="3.20.20.140">
    <property type="entry name" value="Metal-dependent hydrolases"/>
    <property type="match status" value="1"/>
</dbReference>
<dbReference type="Gene3D" id="1.10.2020.10">
    <property type="entry name" value="uronate isomerase, domain 2, chain A"/>
    <property type="match status" value="1"/>
</dbReference>
<dbReference type="HAMAP" id="MF_00675">
    <property type="entry name" value="UxaC"/>
    <property type="match status" value="1"/>
</dbReference>
<dbReference type="InterPro" id="IPR032466">
    <property type="entry name" value="Metal_Hydrolase"/>
</dbReference>
<dbReference type="InterPro" id="IPR003766">
    <property type="entry name" value="Uronate_isomerase"/>
</dbReference>
<dbReference type="NCBIfam" id="NF002794">
    <property type="entry name" value="PRK02925.1"/>
    <property type="match status" value="1"/>
</dbReference>
<dbReference type="PANTHER" id="PTHR30068">
    <property type="entry name" value="URONATE ISOMERASE"/>
    <property type="match status" value="1"/>
</dbReference>
<dbReference type="PANTHER" id="PTHR30068:SF4">
    <property type="entry name" value="URONATE ISOMERASE"/>
    <property type="match status" value="1"/>
</dbReference>
<dbReference type="Pfam" id="PF02614">
    <property type="entry name" value="UxaC"/>
    <property type="match status" value="1"/>
</dbReference>
<dbReference type="SUPFAM" id="SSF51556">
    <property type="entry name" value="Metallo-dependent hydrolases"/>
    <property type="match status" value="1"/>
</dbReference>
<name>UXAC_CALS4</name>
<proteinExistence type="inferred from homology"/>
<reference key="1">
    <citation type="journal article" date="2002" name="Genome Res.">
        <title>A complete sequence of the T. tengcongensis genome.</title>
        <authorList>
            <person name="Bao Q."/>
            <person name="Tian Y."/>
            <person name="Li W."/>
            <person name="Xu Z."/>
            <person name="Xuan Z."/>
            <person name="Hu S."/>
            <person name="Dong W."/>
            <person name="Yang J."/>
            <person name="Chen Y."/>
            <person name="Xue Y."/>
            <person name="Xu Y."/>
            <person name="Lai X."/>
            <person name="Huang L."/>
            <person name="Dong X."/>
            <person name="Ma Y."/>
            <person name="Ling L."/>
            <person name="Tan H."/>
            <person name="Chen R."/>
            <person name="Wang J."/>
            <person name="Yu J."/>
            <person name="Yang H."/>
        </authorList>
    </citation>
    <scope>NUCLEOTIDE SEQUENCE [LARGE SCALE GENOMIC DNA]</scope>
    <source>
        <strain>DSM 15242 / JCM 11007 / NBRC 100824 / MB4</strain>
    </source>
</reference>
<gene>
    <name evidence="1" type="primary">uxaC</name>
    <name type="ordered locus">TTE1939</name>
</gene>
<sequence>MRKFMDEDFLLTNETAVKLYHQYAKDMSIYDFHCHLSPKEIYEDRRFKNITEVWLYGDHYKWRLMRANGIDEKYITGDADDYEKFVAYAKTIPMAIGNPVYHWTHLELQRYFGIYDLLNEKTAKSIWERANEVISQEDFSARNILKKSNVKVVITTDDPVDSLEYHIKLKEEKDFDIKVLPAFRPDKGLNIEKDDFLSWIKKLESASGIKITTYDDFLQALEKRIEFFHSVGCRISDHALDYVFYQKTSKQEAEKVFKKVLTEQHLTKEEIDSFKTYTMIFLGKKYAELNWVMQLHIGAMRNNNTKMYRILGPDTGYDSIGDFPIAYSLSRLLDSLEIEGALPKTILYTLNPAANYVIATMIGNFQDGKIAGKMQFGAAWWFNDNKDGIKEQLKTLANVGLLGRFVGMVTDSRSFLSYARHEYFRRILCDLIGEWVENGEVPNDIELLGKIVQDISFNNAKEYMGV</sequence>
<comment type="catalytic activity">
    <reaction evidence="1">
        <text>D-glucuronate = D-fructuronate</text>
        <dbReference type="Rhea" id="RHEA:13049"/>
        <dbReference type="ChEBI" id="CHEBI:58720"/>
        <dbReference type="ChEBI" id="CHEBI:59863"/>
        <dbReference type="EC" id="5.3.1.12"/>
    </reaction>
</comment>
<comment type="catalytic activity">
    <reaction evidence="1">
        <text>aldehydo-D-galacturonate = keto-D-tagaturonate</text>
        <dbReference type="Rhea" id="RHEA:27702"/>
        <dbReference type="ChEBI" id="CHEBI:12952"/>
        <dbReference type="ChEBI" id="CHEBI:17886"/>
        <dbReference type="EC" id="5.3.1.12"/>
    </reaction>
</comment>
<comment type="pathway">
    <text evidence="1">Carbohydrate metabolism; pentose and glucuronate interconversion.</text>
</comment>
<comment type="similarity">
    <text evidence="1">Belongs to the metallo-dependent hydrolases superfamily. Uronate isomerase family.</text>
</comment>
<keyword id="KW-0413">Isomerase</keyword>
<keyword id="KW-1185">Reference proteome</keyword>
<feature type="chain" id="PRO_0000172790" description="Uronate isomerase">
    <location>
        <begin position="1"/>
        <end position="466"/>
    </location>
</feature>